<accession>A6MMC5</accession>
<evidence type="ECO:0000255" key="1">
    <source>
        <dbReference type="HAMAP-Rule" id="MF_01357"/>
    </source>
</evidence>
<geneLocation type="chloroplast"/>
<gene>
    <name evidence="1" type="primary">ndhJ</name>
</gene>
<proteinExistence type="inferred from homology"/>
<keyword id="KW-0150">Chloroplast</keyword>
<keyword id="KW-0472">Membrane</keyword>
<keyword id="KW-0520">NAD</keyword>
<keyword id="KW-0521">NADP</keyword>
<keyword id="KW-0934">Plastid</keyword>
<keyword id="KW-0618">Plastoquinone</keyword>
<keyword id="KW-0874">Quinone</keyword>
<keyword id="KW-0793">Thylakoid</keyword>
<keyword id="KW-1278">Translocase</keyword>
<keyword id="KW-0813">Transport</keyword>
<feature type="chain" id="PRO_0000358252" description="NAD(P)H-quinone oxidoreductase subunit J, chloroplastic">
    <location>
        <begin position="1"/>
        <end position="158"/>
    </location>
</feature>
<name>NDHJ_CHLSC</name>
<protein>
    <recommendedName>
        <fullName evidence="1">NAD(P)H-quinone oxidoreductase subunit J, chloroplastic</fullName>
        <ecNumber evidence="1">7.1.1.-</ecNumber>
    </recommendedName>
    <alternativeName>
        <fullName>NAD(P)H dehydrogenase subunit J</fullName>
    </alternativeName>
    <alternativeName>
        <fullName evidence="1">NADH-plastoquinone oxidoreductase subunit J</fullName>
    </alternativeName>
</protein>
<sequence>MQGRLSAWLVKHELVHRSLGFDYQGIETLQIKPEDWYSIAVISYVYGYNYLRSQCAYDIAPGGLLASVYHLTRIQYGVDQPEEVCIKVFAPRRNPRIPSVFWIWKSADFQERESYDMLGISYDNHPRLKRILMPESWIGWPLRKDYIAPNFYEIQDAH</sequence>
<dbReference type="EC" id="7.1.1.-" evidence="1"/>
<dbReference type="EMBL" id="EF380352">
    <property type="protein sequence ID" value="ABQ43263.1"/>
    <property type="molecule type" value="Genomic_DNA"/>
</dbReference>
<dbReference type="RefSeq" id="YP_001294101.1">
    <property type="nucleotide sequence ID" value="NC_009598.1"/>
</dbReference>
<dbReference type="SMR" id="A6MMC5"/>
<dbReference type="GeneID" id="5236458"/>
<dbReference type="GO" id="GO:0009535">
    <property type="term" value="C:chloroplast thylakoid membrane"/>
    <property type="evidence" value="ECO:0007669"/>
    <property type="project" value="UniProtKB-SubCell"/>
</dbReference>
<dbReference type="GO" id="GO:0008137">
    <property type="term" value="F:NADH dehydrogenase (ubiquinone) activity"/>
    <property type="evidence" value="ECO:0007669"/>
    <property type="project" value="InterPro"/>
</dbReference>
<dbReference type="GO" id="GO:0048038">
    <property type="term" value="F:quinone binding"/>
    <property type="evidence" value="ECO:0007669"/>
    <property type="project" value="UniProtKB-KW"/>
</dbReference>
<dbReference type="GO" id="GO:0019684">
    <property type="term" value="P:photosynthesis, light reaction"/>
    <property type="evidence" value="ECO:0007669"/>
    <property type="project" value="UniProtKB-UniRule"/>
</dbReference>
<dbReference type="FunFam" id="3.30.460.80:FF:000004">
    <property type="entry name" value="NAD(P)H-quinone oxidoreductase subunit J, chloroplastic"/>
    <property type="match status" value="1"/>
</dbReference>
<dbReference type="Gene3D" id="3.30.460.80">
    <property type="entry name" value="NADH:ubiquinone oxidoreductase, 30kDa subunit"/>
    <property type="match status" value="1"/>
</dbReference>
<dbReference type="HAMAP" id="MF_01357">
    <property type="entry name" value="NDH1_NuoC"/>
    <property type="match status" value="1"/>
</dbReference>
<dbReference type="InterPro" id="IPR010218">
    <property type="entry name" value="NADH_DH_suC"/>
</dbReference>
<dbReference type="InterPro" id="IPR037232">
    <property type="entry name" value="NADH_quin_OxRdtase_su_C/D-like"/>
</dbReference>
<dbReference type="InterPro" id="IPR001268">
    <property type="entry name" value="NADH_UbQ_OxRdtase_30kDa_su"/>
</dbReference>
<dbReference type="InterPro" id="IPR020396">
    <property type="entry name" value="NADH_UbQ_OxRdtase_CS"/>
</dbReference>
<dbReference type="NCBIfam" id="NF009141">
    <property type="entry name" value="PRK12494.1"/>
    <property type="match status" value="1"/>
</dbReference>
<dbReference type="PANTHER" id="PTHR10884:SF14">
    <property type="entry name" value="NADH DEHYDROGENASE [UBIQUINONE] IRON-SULFUR PROTEIN 3, MITOCHONDRIAL"/>
    <property type="match status" value="1"/>
</dbReference>
<dbReference type="PANTHER" id="PTHR10884">
    <property type="entry name" value="NADH DEHYDROGENASE UBIQUINONE IRON-SULFUR PROTEIN 3"/>
    <property type="match status" value="1"/>
</dbReference>
<dbReference type="Pfam" id="PF00329">
    <property type="entry name" value="Complex1_30kDa"/>
    <property type="match status" value="1"/>
</dbReference>
<dbReference type="SUPFAM" id="SSF143243">
    <property type="entry name" value="Nqo5-like"/>
    <property type="match status" value="1"/>
</dbReference>
<dbReference type="PROSITE" id="PS00542">
    <property type="entry name" value="COMPLEX1_30K"/>
    <property type="match status" value="1"/>
</dbReference>
<organism>
    <name type="scientific">Chloranthus spicatus</name>
    <name type="common">Chulantree</name>
    <name type="synonym">Nigrina spicata</name>
    <dbReference type="NCBI Taxonomy" id="13006"/>
    <lineage>
        <taxon>Eukaryota</taxon>
        <taxon>Viridiplantae</taxon>
        <taxon>Streptophyta</taxon>
        <taxon>Embryophyta</taxon>
        <taxon>Tracheophyta</taxon>
        <taxon>Spermatophyta</taxon>
        <taxon>Magnoliopsida</taxon>
        <taxon>Chloranthales</taxon>
        <taxon>Chloranthaceae</taxon>
        <taxon>Chloranthus</taxon>
    </lineage>
</organism>
<comment type="function">
    <text evidence="1">NDH shuttles electrons from NAD(P)H:plastoquinone, via FMN and iron-sulfur (Fe-S) centers, to quinones in the photosynthetic chain and possibly in a chloroplast respiratory chain. The immediate electron acceptor for the enzyme in this species is believed to be plastoquinone. Couples the redox reaction to proton translocation, and thus conserves the redox energy in a proton gradient.</text>
</comment>
<comment type="catalytic activity">
    <reaction evidence="1">
        <text>a plastoquinone + NADH + (n+1) H(+)(in) = a plastoquinol + NAD(+) + n H(+)(out)</text>
        <dbReference type="Rhea" id="RHEA:42608"/>
        <dbReference type="Rhea" id="RHEA-COMP:9561"/>
        <dbReference type="Rhea" id="RHEA-COMP:9562"/>
        <dbReference type="ChEBI" id="CHEBI:15378"/>
        <dbReference type="ChEBI" id="CHEBI:17757"/>
        <dbReference type="ChEBI" id="CHEBI:57540"/>
        <dbReference type="ChEBI" id="CHEBI:57945"/>
        <dbReference type="ChEBI" id="CHEBI:62192"/>
    </reaction>
</comment>
<comment type="catalytic activity">
    <reaction evidence="1">
        <text>a plastoquinone + NADPH + (n+1) H(+)(in) = a plastoquinol + NADP(+) + n H(+)(out)</text>
        <dbReference type="Rhea" id="RHEA:42612"/>
        <dbReference type="Rhea" id="RHEA-COMP:9561"/>
        <dbReference type="Rhea" id="RHEA-COMP:9562"/>
        <dbReference type="ChEBI" id="CHEBI:15378"/>
        <dbReference type="ChEBI" id="CHEBI:17757"/>
        <dbReference type="ChEBI" id="CHEBI:57783"/>
        <dbReference type="ChEBI" id="CHEBI:58349"/>
        <dbReference type="ChEBI" id="CHEBI:62192"/>
    </reaction>
</comment>
<comment type="subunit">
    <text evidence="1">NDH is composed of at least 16 different subunits, 5 of which are encoded in the nucleus.</text>
</comment>
<comment type="subcellular location">
    <subcellularLocation>
        <location evidence="1">Plastid</location>
        <location evidence="1">Chloroplast thylakoid membrane</location>
        <topology evidence="1">Peripheral membrane protein</topology>
        <orientation evidence="1">Stromal side</orientation>
    </subcellularLocation>
</comment>
<comment type="similarity">
    <text evidence="1">Belongs to the complex I 30 kDa subunit family.</text>
</comment>
<reference key="1">
    <citation type="journal article" date="2007" name="Mol. Phylogenet. Evol.">
        <title>Phylogenetic and evolutionary implications of complete chloroplast genome sequences of four early-diverging angiosperms: Buxus (Buxaceae), Chloranthus (Chloranthaceae), Dioscorea (Dioscoreaceae), and Illicium (Schisandraceae).</title>
        <authorList>
            <person name="Hansen D.R."/>
            <person name="Dastidar S.G."/>
            <person name="Cai Z."/>
            <person name="Penaflor C."/>
            <person name="Kuehl J.V."/>
            <person name="Boore J.L."/>
            <person name="Jansen R.K."/>
        </authorList>
    </citation>
    <scope>NUCLEOTIDE SEQUENCE [LARGE SCALE GENOMIC DNA]</scope>
</reference>